<dbReference type="EMBL" id="AE005174">
    <property type="protein sequence ID" value="AAG58339.1"/>
    <property type="molecule type" value="Genomic_DNA"/>
</dbReference>
<dbReference type="EMBL" id="BA000007">
    <property type="protein sequence ID" value="BAB37507.1"/>
    <property type="molecule type" value="Genomic_DNA"/>
</dbReference>
<dbReference type="PIR" id="D91139">
    <property type="entry name" value="D91139"/>
</dbReference>
<dbReference type="PIR" id="G85984">
    <property type="entry name" value="G85984"/>
</dbReference>
<dbReference type="RefSeq" id="WP_000243741.1">
    <property type="nucleotide sequence ID" value="NZ_VOAI01000014.1"/>
</dbReference>
<dbReference type="SMR" id="P0A896"/>
<dbReference type="STRING" id="155864.Z4568"/>
<dbReference type="GeneID" id="93778776"/>
<dbReference type="KEGG" id="ece:Z4568"/>
<dbReference type="KEGG" id="ecs:ECs_4084"/>
<dbReference type="PATRIC" id="fig|386585.9.peg.4263"/>
<dbReference type="eggNOG" id="COG1660">
    <property type="taxonomic scope" value="Bacteria"/>
</dbReference>
<dbReference type="HOGENOM" id="CLU_059558_1_1_6"/>
<dbReference type="OMA" id="GFKHGVP"/>
<dbReference type="Proteomes" id="UP000000558">
    <property type="component" value="Chromosome"/>
</dbReference>
<dbReference type="Proteomes" id="UP000002519">
    <property type="component" value="Chromosome"/>
</dbReference>
<dbReference type="GO" id="GO:0005524">
    <property type="term" value="F:ATP binding"/>
    <property type="evidence" value="ECO:0007669"/>
    <property type="project" value="UniProtKB-UniRule"/>
</dbReference>
<dbReference type="GO" id="GO:0005525">
    <property type="term" value="F:GTP binding"/>
    <property type="evidence" value="ECO:0007669"/>
    <property type="project" value="UniProtKB-UniRule"/>
</dbReference>
<dbReference type="GO" id="GO:0003723">
    <property type="term" value="F:RNA binding"/>
    <property type="evidence" value="ECO:0007669"/>
    <property type="project" value="UniProtKB-KW"/>
</dbReference>
<dbReference type="Gene3D" id="3.40.50.300">
    <property type="entry name" value="P-loop containing nucleotide triphosphate hydrolases"/>
    <property type="match status" value="1"/>
</dbReference>
<dbReference type="HAMAP" id="MF_00636">
    <property type="entry name" value="RapZ_like"/>
    <property type="match status" value="1"/>
</dbReference>
<dbReference type="InterPro" id="IPR027417">
    <property type="entry name" value="P-loop_NTPase"/>
</dbReference>
<dbReference type="InterPro" id="IPR005337">
    <property type="entry name" value="RapZ-like"/>
</dbReference>
<dbReference type="InterPro" id="IPR053930">
    <property type="entry name" value="RapZ-like_N"/>
</dbReference>
<dbReference type="InterPro" id="IPR053931">
    <property type="entry name" value="RapZ_C"/>
</dbReference>
<dbReference type="NCBIfam" id="NF003828">
    <property type="entry name" value="PRK05416.1"/>
    <property type="match status" value="1"/>
</dbReference>
<dbReference type="PANTHER" id="PTHR30448">
    <property type="entry name" value="RNASE ADAPTER PROTEIN RAPZ"/>
    <property type="match status" value="1"/>
</dbReference>
<dbReference type="PANTHER" id="PTHR30448:SF0">
    <property type="entry name" value="RNASE ADAPTER PROTEIN RAPZ"/>
    <property type="match status" value="1"/>
</dbReference>
<dbReference type="Pfam" id="PF22740">
    <property type="entry name" value="PapZ_C"/>
    <property type="match status" value="1"/>
</dbReference>
<dbReference type="Pfam" id="PF03668">
    <property type="entry name" value="RapZ-like_N"/>
    <property type="match status" value="1"/>
</dbReference>
<dbReference type="PIRSF" id="PIRSF005052">
    <property type="entry name" value="P-loopkin"/>
    <property type="match status" value="1"/>
</dbReference>
<dbReference type="SUPFAM" id="SSF52540">
    <property type="entry name" value="P-loop containing nucleoside triphosphate hydrolases"/>
    <property type="match status" value="1"/>
</dbReference>
<protein>
    <recommendedName>
        <fullName evidence="1">RNase adapter protein RapZ</fullName>
    </recommendedName>
</protein>
<organism>
    <name type="scientific">Escherichia coli O157:H7</name>
    <dbReference type="NCBI Taxonomy" id="83334"/>
    <lineage>
        <taxon>Bacteria</taxon>
        <taxon>Pseudomonadati</taxon>
        <taxon>Pseudomonadota</taxon>
        <taxon>Gammaproteobacteria</taxon>
        <taxon>Enterobacterales</taxon>
        <taxon>Enterobacteriaceae</taxon>
        <taxon>Escherichia</taxon>
    </lineage>
</organism>
<gene>
    <name evidence="1" type="primary">rapZ</name>
    <name type="ordered locus">Z4568</name>
    <name type="ordered locus">ECs4084</name>
</gene>
<accession>P0A896</accession>
<accession>P33995</accession>
<evidence type="ECO:0000255" key="1">
    <source>
        <dbReference type="HAMAP-Rule" id="MF_00636"/>
    </source>
</evidence>
<proteinExistence type="inferred from homology"/>
<sequence length="284" mass="32492">MVLMIVSGRSGSGKSVALRALEDMGFYCVDNLPVVLLPDLARTLADREISAAVSIDVRNMPESPEIFEQAMSNLPDAFSPQLLFLDADRNTLIRRYSDTRRLHPLSSKNLSLESAIDKESDLLEPLRSRADLIVDTSEMSVHELAEMLRTRLLGKRERELTMVFESFGFKHGIPIDADYVFDVRFLPNPHWDPKLRPMTGLDKPVAAFLDRHTEVHNFIYQTRSYLELWLPMLETNNRSYLTVAIGCTGGKHRSVYIAEQLADYFRSRGKNVQSRHRTLEKRKP</sequence>
<keyword id="KW-0067">ATP-binding</keyword>
<keyword id="KW-0342">GTP-binding</keyword>
<keyword id="KW-0547">Nucleotide-binding</keyword>
<keyword id="KW-1185">Reference proteome</keyword>
<keyword id="KW-0694">RNA-binding</keyword>
<name>RAPZ_ECO57</name>
<comment type="function">
    <text evidence="1">Modulates the synthesis of GlmS, by affecting the processing and stability of the regulatory small RNA GlmZ. When glucosamine-6-phosphate (GlcN6P) concentrations are high in the cell, RapZ binds GlmZ and targets it to cleavage by RNase E. Consequently, GlmZ is inactivated and unable to activate GlmS synthesis. Under low GlcN6P concentrations, RapZ is sequestered and inactivated by an other regulatory small RNA, GlmY, preventing GlmZ degradation and leading to synthesis of GlmS.</text>
</comment>
<comment type="subunit">
    <text evidence="1">Homotrimer.</text>
</comment>
<comment type="similarity">
    <text evidence="1">Belongs to the RapZ-like family. RapZ subfamily.</text>
</comment>
<feature type="chain" id="PRO_0000107706" description="RNase adapter protein RapZ">
    <location>
        <begin position="1"/>
        <end position="284"/>
    </location>
</feature>
<feature type="region of interest" description="RNA-binding" evidence="1">
    <location>
        <begin position="266"/>
        <end position="284"/>
    </location>
</feature>
<feature type="binding site" evidence="1">
    <location>
        <begin position="8"/>
        <end position="15"/>
    </location>
    <ligand>
        <name>ATP</name>
        <dbReference type="ChEBI" id="CHEBI:30616"/>
    </ligand>
</feature>
<feature type="binding site" evidence="1">
    <location>
        <begin position="56"/>
        <end position="59"/>
    </location>
    <ligand>
        <name>GTP</name>
        <dbReference type="ChEBI" id="CHEBI:37565"/>
    </ligand>
</feature>
<reference key="1">
    <citation type="journal article" date="2001" name="Nature">
        <title>Genome sequence of enterohaemorrhagic Escherichia coli O157:H7.</title>
        <authorList>
            <person name="Perna N.T."/>
            <person name="Plunkett G. III"/>
            <person name="Burland V."/>
            <person name="Mau B."/>
            <person name="Glasner J.D."/>
            <person name="Rose D.J."/>
            <person name="Mayhew G.F."/>
            <person name="Evans P.S."/>
            <person name="Gregor J."/>
            <person name="Kirkpatrick H.A."/>
            <person name="Posfai G."/>
            <person name="Hackett J."/>
            <person name="Klink S."/>
            <person name="Boutin A."/>
            <person name="Shao Y."/>
            <person name="Miller L."/>
            <person name="Grotbeck E.J."/>
            <person name="Davis N.W."/>
            <person name="Lim A."/>
            <person name="Dimalanta E.T."/>
            <person name="Potamousis K."/>
            <person name="Apodaca J."/>
            <person name="Anantharaman T.S."/>
            <person name="Lin J."/>
            <person name="Yen G."/>
            <person name="Schwartz D.C."/>
            <person name="Welch R.A."/>
            <person name="Blattner F.R."/>
        </authorList>
    </citation>
    <scope>NUCLEOTIDE SEQUENCE [LARGE SCALE GENOMIC DNA]</scope>
    <source>
        <strain>O157:H7 / EDL933 / ATCC 700927 / EHEC</strain>
    </source>
</reference>
<reference key="2">
    <citation type="journal article" date="2001" name="DNA Res.">
        <title>Complete genome sequence of enterohemorrhagic Escherichia coli O157:H7 and genomic comparison with a laboratory strain K-12.</title>
        <authorList>
            <person name="Hayashi T."/>
            <person name="Makino K."/>
            <person name="Ohnishi M."/>
            <person name="Kurokawa K."/>
            <person name="Ishii K."/>
            <person name="Yokoyama K."/>
            <person name="Han C.-G."/>
            <person name="Ohtsubo E."/>
            <person name="Nakayama K."/>
            <person name="Murata T."/>
            <person name="Tanaka M."/>
            <person name="Tobe T."/>
            <person name="Iida T."/>
            <person name="Takami H."/>
            <person name="Honda T."/>
            <person name="Sasakawa C."/>
            <person name="Ogasawara N."/>
            <person name="Yasunaga T."/>
            <person name="Kuhara S."/>
            <person name="Shiba T."/>
            <person name="Hattori M."/>
            <person name="Shinagawa H."/>
        </authorList>
    </citation>
    <scope>NUCLEOTIDE SEQUENCE [LARGE SCALE GENOMIC DNA]</scope>
    <source>
        <strain>O157:H7 / Sakai / RIMD 0509952 / EHEC</strain>
    </source>
</reference>